<dbReference type="EMBL" id="AY526325">
    <property type="protein sequence ID" value="AAS19691.1"/>
    <property type="molecule type" value="mRNA"/>
</dbReference>
<dbReference type="EMBL" id="AF092930">
    <property type="protein sequence ID" value="AAD16104.1"/>
    <property type="molecule type" value="mRNA"/>
</dbReference>
<dbReference type="RefSeq" id="NP_001028083.1">
    <property type="nucleotide sequence ID" value="NM_001032911.1"/>
</dbReference>
<dbReference type="SMR" id="Q6QT55"/>
<dbReference type="FunCoup" id="Q6QT55">
    <property type="interactions" value="1085"/>
</dbReference>
<dbReference type="STRING" id="9544.ENSMMUP00000015004"/>
<dbReference type="PaxDb" id="9544-ENSMMUP00000015004"/>
<dbReference type="GeneID" id="574293"/>
<dbReference type="KEGG" id="mcc:574293"/>
<dbReference type="CTD" id="367"/>
<dbReference type="eggNOG" id="KOG3575">
    <property type="taxonomic scope" value="Eukaryota"/>
</dbReference>
<dbReference type="InParanoid" id="Q6QT55"/>
<dbReference type="OrthoDB" id="10032732at2759"/>
<dbReference type="Proteomes" id="UP000006718">
    <property type="component" value="Unassembled WGS sequence"/>
</dbReference>
<dbReference type="GO" id="GO:0000785">
    <property type="term" value="C:chromatin"/>
    <property type="evidence" value="ECO:0000250"/>
    <property type="project" value="UniProtKB"/>
</dbReference>
<dbReference type="GO" id="GO:0005737">
    <property type="term" value="C:cytoplasm"/>
    <property type="evidence" value="ECO:0000250"/>
    <property type="project" value="UniProtKB"/>
</dbReference>
<dbReference type="GO" id="GO:0005654">
    <property type="term" value="C:nucleoplasm"/>
    <property type="evidence" value="ECO:0007669"/>
    <property type="project" value="UniProtKB-ARBA"/>
</dbReference>
<dbReference type="GO" id="GO:0005634">
    <property type="term" value="C:nucleus"/>
    <property type="evidence" value="ECO:0000250"/>
    <property type="project" value="UniProtKB"/>
</dbReference>
<dbReference type="GO" id="GO:0005497">
    <property type="term" value="F:androgen binding"/>
    <property type="evidence" value="ECO:0000250"/>
    <property type="project" value="UniProtKB"/>
</dbReference>
<dbReference type="GO" id="GO:0008013">
    <property type="term" value="F:beta-catenin binding"/>
    <property type="evidence" value="ECO:0000250"/>
    <property type="project" value="UniProtKB"/>
</dbReference>
<dbReference type="GO" id="GO:0003700">
    <property type="term" value="F:DNA-binding transcription factor activity"/>
    <property type="evidence" value="ECO:0000250"/>
    <property type="project" value="UniProtKB"/>
</dbReference>
<dbReference type="GO" id="GO:0034056">
    <property type="term" value="F:estrogen response element binding"/>
    <property type="evidence" value="ECO:0000318"/>
    <property type="project" value="GO_Central"/>
</dbReference>
<dbReference type="GO" id="GO:0004879">
    <property type="term" value="F:nuclear receptor activity"/>
    <property type="evidence" value="ECO:0000250"/>
    <property type="project" value="UniProtKB"/>
</dbReference>
<dbReference type="GO" id="GO:0005496">
    <property type="term" value="F:steroid binding"/>
    <property type="evidence" value="ECO:0007669"/>
    <property type="project" value="UniProtKB-KW"/>
</dbReference>
<dbReference type="GO" id="GO:0000976">
    <property type="term" value="F:transcription cis-regulatory region binding"/>
    <property type="evidence" value="ECO:0000250"/>
    <property type="project" value="UniProtKB"/>
</dbReference>
<dbReference type="GO" id="GO:0008270">
    <property type="term" value="F:zinc ion binding"/>
    <property type="evidence" value="ECO:0007669"/>
    <property type="project" value="UniProtKB-KW"/>
</dbReference>
<dbReference type="GO" id="GO:0030521">
    <property type="term" value="P:androgen receptor signaling pathway"/>
    <property type="evidence" value="ECO:0000250"/>
    <property type="project" value="UniProtKB"/>
</dbReference>
<dbReference type="GO" id="GO:0030522">
    <property type="term" value="P:intracellular receptor signaling pathway"/>
    <property type="evidence" value="ECO:0000250"/>
    <property type="project" value="UniProtKB"/>
</dbReference>
<dbReference type="GO" id="GO:0008584">
    <property type="term" value="P:male gonad development"/>
    <property type="evidence" value="ECO:0000318"/>
    <property type="project" value="GO_Central"/>
</dbReference>
<dbReference type="GO" id="GO:2001237">
    <property type="term" value="P:negative regulation of extrinsic apoptotic signaling pathway"/>
    <property type="evidence" value="ECO:0000250"/>
    <property type="project" value="UniProtKB"/>
</dbReference>
<dbReference type="GO" id="GO:0030518">
    <property type="term" value="P:nuclear receptor-mediated steroid hormone signaling pathway"/>
    <property type="evidence" value="ECO:0000318"/>
    <property type="project" value="GO_Central"/>
</dbReference>
<dbReference type="GO" id="GO:0008284">
    <property type="term" value="P:positive regulation of cell population proliferation"/>
    <property type="evidence" value="ECO:0000250"/>
    <property type="project" value="UniProtKB"/>
</dbReference>
<dbReference type="GO" id="GO:0010628">
    <property type="term" value="P:positive regulation of gene expression"/>
    <property type="evidence" value="ECO:0000250"/>
    <property type="project" value="UniProtKB"/>
</dbReference>
<dbReference type="GO" id="GO:0045944">
    <property type="term" value="P:positive regulation of transcription by RNA polymerase II"/>
    <property type="evidence" value="ECO:0000250"/>
    <property type="project" value="UniProtKB"/>
</dbReference>
<dbReference type="GO" id="GO:1903076">
    <property type="term" value="P:regulation of protein localization to plasma membrane"/>
    <property type="evidence" value="ECO:0000250"/>
    <property type="project" value="UniProtKB"/>
</dbReference>
<dbReference type="CDD" id="cd07173">
    <property type="entry name" value="NR_DBD_AR"/>
    <property type="match status" value="1"/>
</dbReference>
<dbReference type="CDD" id="cd07073">
    <property type="entry name" value="NR_LBD_AR"/>
    <property type="match status" value="1"/>
</dbReference>
<dbReference type="FunFam" id="3.30.50.10:FF:000024">
    <property type="entry name" value="Androgen receptor"/>
    <property type="match status" value="1"/>
</dbReference>
<dbReference type="FunFam" id="1.10.565.10:FF:000004">
    <property type="entry name" value="Androgen receptor variant"/>
    <property type="match status" value="1"/>
</dbReference>
<dbReference type="Gene3D" id="3.30.50.10">
    <property type="entry name" value="Erythroid Transcription Factor GATA-1, subunit A"/>
    <property type="match status" value="1"/>
</dbReference>
<dbReference type="Gene3D" id="1.10.565.10">
    <property type="entry name" value="Retinoid X Receptor"/>
    <property type="match status" value="1"/>
</dbReference>
<dbReference type="InterPro" id="IPR001103">
    <property type="entry name" value="Andrgn_rcpt"/>
</dbReference>
<dbReference type="InterPro" id="IPR035500">
    <property type="entry name" value="NHR-like_dom_sf"/>
</dbReference>
<dbReference type="InterPro" id="IPR000536">
    <property type="entry name" value="Nucl_hrmn_rcpt_lig-bd"/>
</dbReference>
<dbReference type="InterPro" id="IPR050200">
    <property type="entry name" value="Nuclear_hormone_rcpt_NR3"/>
</dbReference>
<dbReference type="InterPro" id="IPR001628">
    <property type="entry name" value="Znf_hrmn_rcpt"/>
</dbReference>
<dbReference type="InterPro" id="IPR013088">
    <property type="entry name" value="Znf_NHR/GATA"/>
</dbReference>
<dbReference type="PANTHER" id="PTHR48092">
    <property type="entry name" value="KNIRPS-RELATED PROTEIN-RELATED"/>
    <property type="match status" value="1"/>
</dbReference>
<dbReference type="Pfam" id="PF02166">
    <property type="entry name" value="Androgen_recep"/>
    <property type="match status" value="1"/>
</dbReference>
<dbReference type="Pfam" id="PF00104">
    <property type="entry name" value="Hormone_recep"/>
    <property type="match status" value="1"/>
</dbReference>
<dbReference type="Pfam" id="PF00105">
    <property type="entry name" value="zf-C4"/>
    <property type="match status" value="1"/>
</dbReference>
<dbReference type="PRINTS" id="PR00521">
    <property type="entry name" value="ANDROGENR"/>
</dbReference>
<dbReference type="PRINTS" id="PR00047">
    <property type="entry name" value="STROIDFINGER"/>
</dbReference>
<dbReference type="SMART" id="SM00430">
    <property type="entry name" value="HOLI"/>
    <property type="match status" value="1"/>
</dbReference>
<dbReference type="SMART" id="SM00399">
    <property type="entry name" value="ZnF_C4"/>
    <property type="match status" value="1"/>
</dbReference>
<dbReference type="SUPFAM" id="SSF57716">
    <property type="entry name" value="Glucocorticoid receptor-like (DNA-binding domain)"/>
    <property type="match status" value="1"/>
</dbReference>
<dbReference type="SUPFAM" id="SSF48508">
    <property type="entry name" value="Nuclear receptor ligand-binding domain"/>
    <property type="match status" value="1"/>
</dbReference>
<dbReference type="PROSITE" id="PS51843">
    <property type="entry name" value="NR_LBD"/>
    <property type="match status" value="1"/>
</dbReference>
<dbReference type="PROSITE" id="PS00031">
    <property type="entry name" value="NUCLEAR_REC_DBD_1"/>
    <property type="match status" value="1"/>
</dbReference>
<dbReference type="PROSITE" id="PS51030">
    <property type="entry name" value="NUCLEAR_REC_DBD_2"/>
    <property type="match status" value="1"/>
</dbReference>
<organism>
    <name type="scientific">Macaca mulatta</name>
    <name type="common">Rhesus macaque</name>
    <dbReference type="NCBI Taxonomy" id="9544"/>
    <lineage>
        <taxon>Eukaryota</taxon>
        <taxon>Metazoa</taxon>
        <taxon>Chordata</taxon>
        <taxon>Craniata</taxon>
        <taxon>Vertebrata</taxon>
        <taxon>Euteleostomi</taxon>
        <taxon>Mammalia</taxon>
        <taxon>Eutheria</taxon>
        <taxon>Euarchontoglires</taxon>
        <taxon>Primates</taxon>
        <taxon>Haplorrhini</taxon>
        <taxon>Catarrhini</taxon>
        <taxon>Cercopithecidae</taxon>
        <taxon>Cercopithecinae</taxon>
        <taxon>Macaca</taxon>
    </lineage>
</organism>
<evidence type="ECO:0000250" key="1"/>
<evidence type="ECO:0000250" key="2">
    <source>
        <dbReference type="UniProtKB" id="P10275"/>
    </source>
</evidence>
<evidence type="ECO:0000250" key="3">
    <source>
        <dbReference type="UniProtKB" id="P15207"/>
    </source>
</evidence>
<evidence type="ECO:0000250" key="4">
    <source>
        <dbReference type="UniProtKB" id="P19091"/>
    </source>
</evidence>
<evidence type="ECO:0000255" key="5">
    <source>
        <dbReference type="PROSITE-ProRule" id="PRU00407"/>
    </source>
</evidence>
<evidence type="ECO:0000255" key="6">
    <source>
        <dbReference type="PROSITE-ProRule" id="PRU01189"/>
    </source>
</evidence>
<evidence type="ECO:0000256" key="7">
    <source>
        <dbReference type="SAM" id="MobiDB-lite"/>
    </source>
</evidence>
<evidence type="ECO:0000305" key="8"/>
<accession>Q6QT55</accession>
<accession>O97891</accession>
<name>ANDR_MACMU</name>
<proteinExistence type="evidence at transcript level"/>
<gene>
    <name type="primary">AR</name>
    <name type="synonym">NR3C4</name>
</gene>
<protein>
    <recommendedName>
        <fullName>Androgen receptor</fullName>
    </recommendedName>
    <alternativeName>
        <fullName>Dihydrotestosterone receptor</fullName>
    </alternativeName>
    <alternativeName>
        <fullName>Nuclear receptor subfamily 3 group C member 4</fullName>
    </alternativeName>
</protein>
<comment type="function">
    <text evidence="2 3">Steroid hormone receptors are ligand-activated transcription factors that regulate eukaryotic gene expression and affect cellular proliferation and differentiation in target tissues. Transcription factor activity is modulated by bound coactivator and corepressor proteins like ZBTB7A that recruits NCOR1 and NCOR2 to the androgen response elements/ARE on target genes, negatively regulating androgen receptor signaling and androgen-induced cell proliferation. Transcription activation is also down-regulated by NR0B2. Activated, but not phosphorylated, by HIPK3 and ZIPK/DAPK3.</text>
</comment>
<comment type="subunit">
    <text evidence="2 3 4">Binds DNA as a homodimer. Part of a ternary complex containing AR, EFCAB6/DJBP and PARK7. Interacts with HIPK3 and NR0B2 in the presence of androgen. The ligand binding domain interacts with KAT7/HBO1 in the presence of dihydrotestosterone. Interacts with EFCAB6/DJBP, PQBP1, RANBP9, RBAK, SPDEF, SRA1, TGFB1I1 and RREB1. Interacts with ZMIZ1/ZIMP10 and ZMIZ2/ZMIP7 which both enhance its transactivation activity. Interacts with SLC30A9 and RAD54L2/ARIP4. Interacts with MACROD1 (via macro domain) (By similarity). Interacts via the ligand-binding domain with LXXLL and FXXLF motifs from NCOA1, NCOA2, NCOA3 and MAGEA11. Interacts (via nuclear receptor DNA binding domain and nuclear receptor ligand binding domain) with NCOA4 (By similarity). The AR N-terminal poly-Gln region binds Ran resulting in enhancement of AR-mediated transactivation. Ran-binding decreases as the poly-Gln length increases. Interacts with HIP1 (via coiled coil domain). Interacts (via ligand-binding domain) with TRIM68. Interacts with TNK2. Interacts with USP26. Interacts with RNF6. Interacts (regulated by RNF6 probably through polyubiquitination) with RNF14; regulates AR transcriptional activity. Interacts with PRMT2 and TRIM24. Interacts with RACK1. Interacts with RANBP10; this interaction enhances dihydrotestosterone-induced AR transcriptional activity. Interacts with PRPF6 in a hormone-independent way; this interaction enhances dihydrotestosterone-induced AR transcriptional activity. Interacts with STK4/MST1. Interacts with ZIPK/DAPK3. Interacts with LPXN. Interacts with MAK. Part of a complex containing AR, MAK and NCOA3. Interacts with CRY1. Interacts with CCAR1 and GATA2. Interacts with ZNF318. Interacts with BUD31. Interacts with ARID4A. Interacts with ARID4B. Interacts (via NR LBD domain) with ZBTB7A; the interaction is direct and androgen-dependent (By similarity). Interacts with NCOR1 (By similarity). Interacts with NCOR2 (By similarity). Interacts with CRY2 in a ligand-dependent manner (By similarity).</text>
</comment>
<comment type="subcellular location">
    <subcellularLocation>
        <location evidence="2">Nucleus</location>
    </subcellularLocation>
    <subcellularLocation>
        <location evidence="2">Cytoplasm</location>
    </subcellularLocation>
    <text evidence="2">Detected at the promoter of target genes. Predominantly cytoplasmic in unligated form but translocates to the nucleus upon ligand-binding. Can also translocate to the nucleus in unligated form in the presence of RACK1.</text>
</comment>
<comment type="domain">
    <text evidence="1">Composed of three domains: a modulating N-terminal domain, a DNA-binding domain and a C-terminal ligand-binding domain. In the presence of bound steroid the ligand-binding domain interacts with the N-terminal modulating domain, and thereby activates AR transcription factor activity. Agonist binding is required for dimerization and binding to target DNA. The transcription factor activity of the complex formed by ligand-activated AR and DNA is modulated by interactions with coactivator and corepressor proteins. Interaction with RANBP9 is mediated by both the N-terminal domain and the DNA-binding domain. Interaction with EFCAB6/DJBP is mediated by the DNA-binding domain (By similarity).</text>
</comment>
<comment type="PTM">
    <text evidence="2">Phosphorylated in prostate cancer cells in response to several growth factors including EGF. Phosphorylation is induced by c-Src kinase (CSK). Tyr-510 is one of the major phosphorylation sites and an increase in phosphorylation and Src kinase activity is associated with prostate cancer progression (By similarity). Phosphorylation by TNK2 enhances the DNA-binding and transcriptional activity. Phosphorylation at Ser-65 by CDK9 regulates AR promoter selectivity and cell growth (By similarity).</text>
</comment>
<comment type="PTM">
    <text evidence="2">Sumoylated on Lys-371 (major) and Lys-496 (By similarity). Ubiquitinated. Deubiquitinated by USP26 (By similarity). 'Lys-6' and 'Lys-27'-linked polyubiquitination by RNF6 modulates AR transcriptional activity and specificity (By similarity).</text>
</comment>
<comment type="PTM">
    <text evidence="2">Palmitoylated by ZDHHC7 and ZDHHC21. Palmitoylation is required for plasma membrane targeting and for rapid intracellular signaling via ERK and AKT kinases and cAMP generation (By similarity).</text>
</comment>
<comment type="miscellaneous">
    <text>In the absence of ligand, steroid hormone receptors are thought to be weakly associated with nuclear components; hormone binding greatly increases receptor affinity. The hormone-receptor complex appears to recognize discrete DNA sequences upstream of transcriptional start sites.</text>
</comment>
<comment type="miscellaneous">
    <text>Transcriptional activity is enhanced by binding to RANBP9.</text>
</comment>
<comment type="similarity">
    <text evidence="8">Belongs to the nuclear hormone receptor family. NR3 subfamily.</text>
</comment>
<reference key="1">
    <citation type="submission" date="2004-01" db="EMBL/GenBank/DDBJ databases">
        <title>Full length cDNA encoding rhesus monkey androgen receptor.</title>
        <authorList>
            <person name="Chen F."/>
            <person name="Towler D."/>
        </authorList>
    </citation>
    <scope>NUCLEOTIDE SEQUENCE [MRNA]</scope>
</reference>
<reference key="2">
    <citation type="journal article" date="1999" name="Biol. Reprod.">
        <title>Androgen receptor messenger ribonucleic acid in brains and pituitaries of male rhesus monkeys: studies on distribution, hormonal control, and relationship to luteinizing hormone secretion.</title>
        <authorList>
            <person name="Abdelgadir S.E."/>
            <person name="Roselli C.E."/>
            <person name="Choate J.V."/>
            <person name="Resko J.A."/>
        </authorList>
    </citation>
    <scope>NUCLEOTIDE SEQUENCE [MRNA] OF 767-876</scope>
    <source>
        <tissue>Prostate</tissue>
    </source>
</reference>
<sequence>MEVQLGLGRVYPRPPSKTYRGAFQNLFQSVREVIQNPGPRHPEAASAAPPGASLQQQQQQQQETSPRQQQQQQQGEDGSPQAHRRGPTGYLVLDEEQQPSQPQSAPECHPERGCVPEPGAAVAAGKGLPQQLPAPPDEDDSAAPSTLSLLGPTFPGLSSCSADLKDILSEASTMQLLQQQQQEAVSEGSSSGRAREASGAPTSSKDNYLEGTSTISDSAKELCKAVSVSMGLGVEALEHLSPGEQLRGDCMYAPVLGVPPAVRPTPCAPLAECKGSLLDDSAGKSTEDTAEYSPFKGGYTKGLEGESLGCSGSAAAGSSGTLELPSTLSLYKSGALDEAAAYQSRDYYNFPLALAGPPPPPPPPHPHARIKLENPLDYGSAWAAAAAQCRYGDLASLHGAGAAGPGSGSPSAAASSSWHTLFTAEEGQLYGPCGGGGGGGGGGGGGAGEAGAVAPYGYTRPPQGLAGQEGDFTAPDVWYPGGMVSRVPYPSPTCVKSEMGPWMDSYSGPYGDMRLETARDHVLPIDYYFPPQKTCLICGDEASGCHYGALTCGSCKVFFKRAAEGKQKYLCASRNDCTIDKFRRKNCPSCRLRKCYEAGMTLGARKLKKLGNLKLQEEGEASSTTSPTEETAQKLTVSHIEGYECQPIFLNVLEAIEPGVVCAGHDNNQPDSFAALLSSLNELGERQLVHVVKWAKALPGFRNLHVDDQMAVIQYSWMGLMVFAMGWRSFTNVNSRMLYFAPDLVFNEYRMHKSRMYSQCVRMRHLSQEFGWLQITPQEFLCMKALLLFSIIPVDGLKNQKFFDELRMNYIKELDRIIACKRKNPTSCSRRFYQLTKLLDSVQPIARELHQFTFDLLIKSHMVSVDFPEMMAEIISVQVPKILSGKVKPIYFHTQ</sequence>
<keyword id="KW-0963">Cytoplasm</keyword>
<keyword id="KW-0238">DNA-binding</keyword>
<keyword id="KW-1017">Isopeptide bond</keyword>
<keyword id="KW-0446">Lipid-binding</keyword>
<keyword id="KW-0449">Lipoprotein</keyword>
<keyword id="KW-0479">Metal-binding</keyword>
<keyword id="KW-0539">Nucleus</keyword>
<keyword id="KW-0564">Palmitate</keyword>
<keyword id="KW-0597">Phosphoprotein</keyword>
<keyword id="KW-0675">Receptor</keyword>
<keyword id="KW-1185">Reference proteome</keyword>
<keyword id="KW-0754">Steroid-binding</keyword>
<keyword id="KW-0804">Transcription</keyword>
<keyword id="KW-0805">Transcription regulation</keyword>
<keyword id="KW-0832">Ubl conjugation</keyword>
<keyword id="KW-0862">Zinc</keyword>
<keyword id="KW-0863">Zinc-finger</keyword>
<feature type="chain" id="PRO_0000053706" description="Androgen receptor">
    <location>
        <begin position="1"/>
        <end position="895"/>
    </location>
</feature>
<feature type="domain" description="NR LBD" evidence="6">
    <location>
        <begin position="644"/>
        <end position="875"/>
    </location>
</feature>
<feature type="DNA-binding region" description="Nuclear receptor" evidence="5">
    <location>
        <begin position="534"/>
        <end position="607"/>
    </location>
</feature>
<feature type="zinc finger region" description="NR C4-type" evidence="5">
    <location>
        <begin position="535"/>
        <end position="555"/>
    </location>
</feature>
<feature type="zinc finger region" description="NR C4-type" evidence="5">
    <location>
        <begin position="571"/>
        <end position="595"/>
    </location>
</feature>
<feature type="region of interest" description="Interaction with ZNF318" evidence="4">
    <location>
        <begin position="1"/>
        <end position="562"/>
    </location>
</feature>
<feature type="region of interest" description="Modulating" evidence="1">
    <location>
        <begin position="1"/>
        <end position="533"/>
    </location>
</feature>
<feature type="region of interest" description="Disordered" evidence="7">
    <location>
        <begin position="33"/>
        <end position="150"/>
    </location>
</feature>
<feature type="region of interest" description="Disordered" evidence="7">
    <location>
        <begin position="178"/>
        <end position="211"/>
    </location>
</feature>
<feature type="region of interest" description="Interaction with LPXN" evidence="2">
    <location>
        <begin position="527"/>
        <end position="894"/>
    </location>
</feature>
<feature type="region of interest" description="Interaction with HIPK3" evidence="3">
    <location>
        <begin position="547"/>
        <end position="637"/>
    </location>
</feature>
<feature type="region of interest" description="Interaction with CCAR1" evidence="2">
    <location>
        <begin position="567"/>
        <end position="894"/>
    </location>
</feature>
<feature type="region of interest" description="Interaction with KAT7" evidence="2">
    <location>
        <begin position="600"/>
        <end position="894"/>
    </location>
</feature>
<feature type="compositionally biased region" description="Low complexity" evidence="7">
    <location>
        <begin position="44"/>
        <end position="81"/>
    </location>
</feature>
<feature type="compositionally biased region" description="Low complexity" evidence="7">
    <location>
        <begin position="178"/>
        <end position="200"/>
    </location>
</feature>
<feature type="compositionally biased region" description="Polar residues" evidence="7">
    <location>
        <begin position="201"/>
        <end position="211"/>
    </location>
</feature>
<feature type="binding site" evidence="2">
    <location>
        <position position="681"/>
    </location>
    <ligand>
        <name>17beta-hydroxy-5alpha-androstan-3-one</name>
        <dbReference type="ChEBI" id="CHEBI:16330"/>
    </ligand>
</feature>
<feature type="binding site" evidence="2">
    <location>
        <position position="728"/>
    </location>
    <ligand>
        <name>17beta-hydroxy-5alpha-androstan-3-one</name>
        <dbReference type="ChEBI" id="CHEBI:16330"/>
    </ligand>
</feature>
<feature type="binding site" evidence="2">
    <location>
        <position position="853"/>
    </location>
    <ligand>
        <name>17beta-hydroxy-5alpha-androstan-3-one</name>
        <dbReference type="ChEBI" id="CHEBI:16330"/>
    </ligand>
</feature>
<feature type="site" description="Interaction with coactivator LXXL and FXXFY motifs" evidence="2">
    <location>
        <position position="696"/>
    </location>
</feature>
<feature type="site" description="Interaction with coactivator FXXLF and FXXFY motifs" evidence="2">
    <location>
        <position position="873"/>
    </location>
</feature>
<feature type="modified residue" description="Phosphoserine; by CDK9" evidence="2">
    <location>
        <position position="65"/>
    </location>
</feature>
<feature type="modified residue" description="Phosphoserine" evidence="2">
    <location>
        <position position="79"/>
    </location>
</feature>
<feature type="modified residue" description="Phosphotyrosine; by CSK" evidence="2">
    <location>
        <position position="208"/>
    </location>
</feature>
<feature type="modified residue" description="Phosphoserine" evidence="2">
    <location>
        <position position="241"/>
    </location>
</feature>
<feature type="modified residue" description="Phosphotyrosine; by CSK and TNK2" evidence="2">
    <location>
        <position position="252"/>
    </location>
</feature>
<feature type="modified residue" description="Phosphotyrosine; by CSK" evidence="2">
    <location>
        <position position="292"/>
    </location>
</feature>
<feature type="modified residue" description="Phosphotyrosine; by CSK" evidence="2">
    <location>
        <position position="331"/>
    </location>
</feature>
<feature type="modified residue" description="Phosphotyrosine; by CSK" evidence="2">
    <location>
        <position position="342"/>
    </location>
</feature>
<feature type="modified residue" description="Phosphotyrosine; by CSK" evidence="2">
    <location>
        <position position="347"/>
    </location>
</feature>
<feature type="modified residue" description="Phosphotyrosine; by CSK and TNK2" evidence="2">
    <location>
        <position position="348"/>
    </location>
</feature>
<feature type="modified residue" description="Phosphotyrosine; by CSK" evidence="2">
    <location>
        <position position="378"/>
    </location>
</feature>
<feature type="modified residue" description="Phosphotyrosine; by CSK" evidence="2">
    <location>
        <position position="510"/>
    </location>
</feature>
<feature type="modified residue" description="Phosphotyrosine; by CSK" evidence="2">
    <location>
        <position position="527"/>
    </location>
</feature>
<feature type="modified residue" description="Phosphoserine; by STK4/MST1" evidence="2">
    <location>
        <position position="626"/>
    </location>
</feature>
<feature type="modified residue" description="Phosphotyrosine; by CSK" evidence="2">
    <location>
        <position position="891"/>
    </location>
</feature>
<feature type="cross-link" description="Glycyl lysine isopeptide (Lys-Gly) (interchain with G-Cter in SUMO)" evidence="1">
    <location>
        <position position="371"/>
    </location>
</feature>
<feature type="cross-link" description="Glycyl lysine isopeptide (Lys-Gly) (interchain with G-Cter in SUMO)" evidence="1">
    <location>
        <position position="496"/>
    </location>
</feature>
<feature type="cross-link" description="Glycyl lysine isopeptide (Lys-Gly) (interchain with G-Cter in ubiquitin)" evidence="2">
    <location>
        <position position="821"/>
    </location>
</feature>
<feature type="cross-link" description="Glycyl lysine isopeptide (Lys-Gly) (interchain with G-Cter in ubiquitin)" evidence="2">
    <location>
        <position position="823"/>
    </location>
</feature>